<evidence type="ECO:0000250" key="1"/>
<evidence type="ECO:0000305" key="2"/>
<reference key="1">
    <citation type="submission" date="2009-01" db="EMBL/GenBank/DDBJ databases">
        <title>Complete sequence of Geobacter sp. FRC-32.</title>
        <authorList>
            <consortium name="US DOE Joint Genome Institute"/>
            <person name="Lucas S."/>
            <person name="Copeland A."/>
            <person name="Lapidus A."/>
            <person name="Glavina del Rio T."/>
            <person name="Dalin E."/>
            <person name="Tice H."/>
            <person name="Bruce D."/>
            <person name="Goodwin L."/>
            <person name="Pitluck S."/>
            <person name="Saunders E."/>
            <person name="Brettin T."/>
            <person name="Detter J.C."/>
            <person name="Han C."/>
            <person name="Larimer F."/>
            <person name="Land M."/>
            <person name="Hauser L."/>
            <person name="Kyrpides N."/>
            <person name="Ovchinnikova G."/>
            <person name="Kostka J."/>
            <person name="Richardson P."/>
        </authorList>
    </citation>
    <scope>NUCLEOTIDE SEQUENCE [LARGE SCALE GENOMIC DNA]</scope>
    <source>
        <strain>DSM 22248 / JCM 15807 / FRC-32</strain>
    </source>
</reference>
<organism>
    <name type="scientific">Geotalea daltonii (strain DSM 22248 / JCM 15807 / FRC-32)</name>
    <name type="common">Geobacter daltonii</name>
    <dbReference type="NCBI Taxonomy" id="316067"/>
    <lineage>
        <taxon>Bacteria</taxon>
        <taxon>Pseudomonadati</taxon>
        <taxon>Thermodesulfobacteriota</taxon>
        <taxon>Desulfuromonadia</taxon>
        <taxon>Geobacterales</taxon>
        <taxon>Geobacteraceae</taxon>
        <taxon>Geotalea</taxon>
    </lineage>
</organism>
<proteinExistence type="inferred from homology"/>
<accession>B9M211</accession>
<protein>
    <recommendedName>
        <fullName>Dihydroorotate dehydrogenase B (NAD(+)), catalytic subunit</fullName>
        <shortName>DHOD B</shortName>
        <shortName>DHODase B</shortName>
        <shortName>DHOdehase B</shortName>
        <ecNumber>1.3.1.14</ecNumber>
    </recommendedName>
    <alternativeName>
        <fullName>Dihydroorotate oxidase B</fullName>
    </alternativeName>
    <alternativeName>
        <fullName>Orotate reductase (NADH)</fullName>
    </alternativeName>
</protein>
<keyword id="KW-0963">Cytoplasm</keyword>
<keyword id="KW-0285">Flavoprotein</keyword>
<keyword id="KW-0288">FMN</keyword>
<keyword id="KW-0520">NAD</keyword>
<keyword id="KW-0560">Oxidoreductase</keyword>
<keyword id="KW-0665">Pyrimidine biosynthesis</keyword>
<keyword id="KW-1185">Reference proteome</keyword>
<gene>
    <name type="primary">pyrD</name>
    <name type="ordered locus">Geob_2780</name>
</gene>
<feature type="chain" id="PRO_1000195048" description="Dihydroorotate dehydrogenase B (NAD(+)), catalytic subunit">
    <location>
        <begin position="1"/>
        <end position="305"/>
    </location>
</feature>
<feature type="active site" description="Nucleophile">
    <location>
        <position position="132"/>
    </location>
</feature>
<feature type="binding site" evidence="1">
    <location>
        <position position="23"/>
    </location>
    <ligand>
        <name>FMN</name>
        <dbReference type="ChEBI" id="CHEBI:58210"/>
    </ligand>
</feature>
<feature type="binding site" evidence="1">
    <location>
        <begin position="47"/>
        <end position="48"/>
    </location>
    <ligand>
        <name>FMN</name>
        <dbReference type="ChEBI" id="CHEBI:58210"/>
    </ligand>
</feature>
<feature type="binding site" evidence="1">
    <location>
        <position position="47"/>
    </location>
    <ligand>
        <name>substrate</name>
    </ligand>
</feature>
<feature type="binding site" evidence="1">
    <location>
        <begin position="71"/>
        <end position="75"/>
    </location>
    <ligand>
        <name>substrate</name>
    </ligand>
</feature>
<feature type="binding site" evidence="1">
    <location>
        <position position="101"/>
    </location>
    <ligand>
        <name>FMN</name>
        <dbReference type="ChEBI" id="CHEBI:58210"/>
    </ligand>
</feature>
<feature type="binding site" evidence="1">
    <location>
        <position position="129"/>
    </location>
    <ligand>
        <name>FMN</name>
        <dbReference type="ChEBI" id="CHEBI:58210"/>
    </ligand>
</feature>
<feature type="binding site" evidence="1">
    <location>
        <position position="129"/>
    </location>
    <ligand>
        <name>substrate</name>
    </ligand>
</feature>
<feature type="binding site" evidence="1">
    <location>
        <position position="167"/>
    </location>
    <ligand>
        <name>FMN</name>
        <dbReference type="ChEBI" id="CHEBI:58210"/>
    </ligand>
</feature>
<feature type="binding site" evidence="1">
    <location>
        <position position="193"/>
    </location>
    <ligand>
        <name>FMN</name>
        <dbReference type="ChEBI" id="CHEBI:58210"/>
    </ligand>
</feature>
<feature type="binding site" evidence="1">
    <location>
        <begin position="194"/>
        <end position="195"/>
    </location>
    <ligand>
        <name>substrate</name>
    </ligand>
</feature>
<feature type="binding site" evidence="1">
    <location>
        <position position="219"/>
    </location>
    <ligand>
        <name>FMN</name>
        <dbReference type="ChEBI" id="CHEBI:58210"/>
    </ligand>
</feature>
<feature type="binding site" evidence="1">
    <location>
        <begin position="245"/>
        <end position="246"/>
    </location>
    <ligand>
        <name>FMN</name>
        <dbReference type="ChEBI" id="CHEBI:58210"/>
    </ligand>
</feature>
<feature type="binding site" evidence="1">
    <location>
        <begin position="267"/>
        <end position="268"/>
    </location>
    <ligand>
        <name>FMN</name>
        <dbReference type="ChEBI" id="CHEBI:58210"/>
    </ligand>
</feature>
<comment type="function">
    <text evidence="1">Catalyzes the conversion of dihydroorotate to orotate with NAD(+) as electron acceptor.</text>
</comment>
<comment type="catalytic activity">
    <reaction>
        <text>(S)-dihydroorotate + NAD(+) = orotate + NADH + H(+)</text>
        <dbReference type="Rhea" id="RHEA:13513"/>
        <dbReference type="ChEBI" id="CHEBI:15378"/>
        <dbReference type="ChEBI" id="CHEBI:30839"/>
        <dbReference type="ChEBI" id="CHEBI:30864"/>
        <dbReference type="ChEBI" id="CHEBI:57540"/>
        <dbReference type="ChEBI" id="CHEBI:57945"/>
        <dbReference type="EC" id="1.3.1.14"/>
    </reaction>
</comment>
<comment type="cofactor">
    <cofactor evidence="1">
        <name>FMN</name>
        <dbReference type="ChEBI" id="CHEBI:58210"/>
    </cofactor>
    <text evidence="1">Binds 1 FMN per subunit.</text>
</comment>
<comment type="pathway">
    <text>Pyrimidine metabolism; UMP biosynthesis via de novo pathway; orotate from (S)-dihydroorotate (NAD(+) route): step 1/1.</text>
</comment>
<comment type="subunit">
    <text evidence="1">Heterotetramer of 2 PyrK and 2 PyrD type B subunits.</text>
</comment>
<comment type="subcellular location">
    <subcellularLocation>
        <location evidence="1">Cytoplasm</location>
    </subcellularLocation>
</comment>
<comment type="similarity">
    <text evidence="2">Belongs to the dihydroorotate dehydrogenase family. Type 1 subfamily.</text>
</comment>
<name>PYRDB_GEODF</name>
<dbReference type="EC" id="1.3.1.14"/>
<dbReference type="EMBL" id="CP001390">
    <property type="protein sequence ID" value="ACM21129.1"/>
    <property type="molecule type" value="Genomic_DNA"/>
</dbReference>
<dbReference type="RefSeq" id="WP_012647857.1">
    <property type="nucleotide sequence ID" value="NC_011979.1"/>
</dbReference>
<dbReference type="SMR" id="B9M211"/>
<dbReference type="STRING" id="316067.Geob_2780"/>
<dbReference type="KEGG" id="geo:Geob_2780"/>
<dbReference type="eggNOG" id="COG0167">
    <property type="taxonomic scope" value="Bacteria"/>
</dbReference>
<dbReference type="HOGENOM" id="CLU_042042_0_0_7"/>
<dbReference type="OrthoDB" id="9802377at2"/>
<dbReference type="UniPathway" id="UPA00070">
    <property type="reaction ID" value="UER00945"/>
</dbReference>
<dbReference type="Proteomes" id="UP000007721">
    <property type="component" value="Chromosome"/>
</dbReference>
<dbReference type="GO" id="GO:0005737">
    <property type="term" value="C:cytoplasm"/>
    <property type="evidence" value="ECO:0007669"/>
    <property type="project" value="UniProtKB-SubCell"/>
</dbReference>
<dbReference type="GO" id="GO:0004589">
    <property type="term" value="F:dihydroorotate dehydrogenase (NAD+) activity"/>
    <property type="evidence" value="ECO:0007669"/>
    <property type="project" value="UniProtKB-EC"/>
</dbReference>
<dbReference type="GO" id="GO:0006207">
    <property type="term" value="P:'de novo' pyrimidine nucleobase biosynthetic process"/>
    <property type="evidence" value="ECO:0007669"/>
    <property type="project" value="InterPro"/>
</dbReference>
<dbReference type="GO" id="GO:0044205">
    <property type="term" value="P:'de novo' UMP biosynthetic process"/>
    <property type="evidence" value="ECO:0007669"/>
    <property type="project" value="UniProtKB-UniRule"/>
</dbReference>
<dbReference type="CDD" id="cd04740">
    <property type="entry name" value="DHOD_1B_like"/>
    <property type="match status" value="1"/>
</dbReference>
<dbReference type="FunFam" id="3.20.20.70:FF:000027">
    <property type="entry name" value="Dihydropyrimidine dehydrogenase [NADP(+)]"/>
    <property type="match status" value="1"/>
</dbReference>
<dbReference type="Gene3D" id="3.20.20.70">
    <property type="entry name" value="Aldolase class I"/>
    <property type="match status" value="1"/>
</dbReference>
<dbReference type="HAMAP" id="MF_00224">
    <property type="entry name" value="DHO_dh_type1"/>
    <property type="match status" value="1"/>
</dbReference>
<dbReference type="InterPro" id="IPR013785">
    <property type="entry name" value="Aldolase_TIM"/>
</dbReference>
<dbReference type="InterPro" id="IPR050074">
    <property type="entry name" value="DHO_dehydrogenase"/>
</dbReference>
<dbReference type="InterPro" id="IPR033888">
    <property type="entry name" value="DHOD_1B"/>
</dbReference>
<dbReference type="InterPro" id="IPR024920">
    <property type="entry name" value="Dihydroorotate_DH_1"/>
</dbReference>
<dbReference type="InterPro" id="IPR012135">
    <property type="entry name" value="Dihydroorotate_DH_1_2"/>
</dbReference>
<dbReference type="InterPro" id="IPR005720">
    <property type="entry name" value="Dihydroorotate_DH_cat"/>
</dbReference>
<dbReference type="InterPro" id="IPR001295">
    <property type="entry name" value="Dihydroorotate_DH_CS"/>
</dbReference>
<dbReference type="InterPro" id="IPR049622">
    <property type="entry name" value="Dihydroorotate_DH_I"/>
</dbReference>
<dbReference type="NCBIfam" id="NF005574">
    <property type="entry name" value="PRK07259.1"/>
    <property type="match status" value="1"/>
</dbReference>
<dbReference type="NCBIfam" id="TIGR01037">
    <property type="entry name" value="pyrD_sub1_fam"/>
    <property type="match status" value="1"/>
</dbReference>
<dbReference type="PANTHER" id="PTHR48109:SF1">
    <property type="entry name" value="DIHYDROOROTATE DEHYDROGENASE (FUMARATE)"/>
    <property type="match status" value="1"/>
</dbReference>
<dbReference type="PANTHER" id="PTHR48109">
    <property type="entry name" value="DIHYDROOROTATE DEHYDROGENASE (QUINONE), MITOCHONDRIAL-RELATED"/>
    <property type="match status" value="1"/>
</dbReference>
<dbReference type="Pfam" id="PF01180">
    <property type="entry name" value="DHO_dh"/>
    <property type="match status" value="1"/>
</dbReference>
<dbReference type="PIRSF" id="PIRSF000164">
    <property type="entry name" value="DHO_oxidase"/>
    <property type="match status" value="1"/>
</dbReference>
<dbReference type="SUPFAM" id="SSF51395">
    <property type="entry name" value="FMN-linked oxidoreductases"/>
    <property type="match status" value="1"/>
</dbReference>
<dbReference type="PROSITE" id="PS00911">
    <property type="entry name" value="DHODEHASE_1"/>
    <property type="match status" value="1"/>
</dbReference>
<dbReference type="PROSITE" id="PS00912">
    <property type="entry name" value="DHODEHASE_2"/>
    <property type="match status" value="1"/>
</dbReference>
<sequence length="305" mass="31862">MAKPDLSVEISGIKLRNPVMTASGTFGYGKEFSDYLDLEKIGAIITKGLSLRPKAGNPTPRIVETPGGMLNAIGLQNVGIDAFIGEKLPFLRTVDTPVIVNLYGNTLEEYGELAEKLDRLPEVAGLEVNISCPNVKQGGIVFGTDPNAAAEVVGLVRRSTSKPLIIKLSPNVTDVVRMADACVNAGADALSLINTLTGMAIDLQKRRPILANITGGLSGPAIKPVALRMVWQVSQAMAVPIIGIGGIMSATDALEFMLAGATAVQVGTANFLDPSAAQTIAAGIEDYLAKNGISDVKELIGALKI</sequence>